<accession>A5D2U6</accession>
<organism>
    <name type="scientific">Pelotomaculum thermopropionicum (strain DSM 13744 / JCM 10971 / SI)</name>
    <dbReference type="NCBI Taxonomy" id="370438"/>
    <lineage>
        <taxon>Bacteria</taxon>
        <taxon>Bacillati</taxon>
        <taxon>Bacillota</taxon>
        <taxon>Clostridia</taxon>
        <taxon>Eubacteriales</taxon>
        <taxon>Desulfotomaculaceae</taxon>
        <taxon>Pelotomaculum</taxon>
    </lineage>
</organism>
<protein>
    <recommendedName>
        <fullName evidence="1">Proline--tRNA ligase</fullName>
        <ecNumber evidence="1">6.1.1.15</ecNumber>
    </recommendedName>
    <alternativeName>
        <fullName evidence="1">Prolyl-tRNA synthetase</fullName>
        <shortName evidence="1">ProRS</shortName>
    </alternativeName>
</protein>
<comment type="function">
    <text evidence="1">Catalyzes the attachment of proline to tRNA(Pro) in a two-step reaction: proline is first activated by ATP to form Pro-AMP and then transferred to the acceptor end of tRNA(Pro). As ProRS can inadvertently accommodate and process non-cognate amino acids such as alanine and cysteine, to avoid such errors it has two additional distinct editing activities against alanine. One activity is designated as 'pretransfer' editing and involves the tRNA(Pro)-independent hydrolysis of activated Ala-AMP. The other activity is designated 'posttransfer' editing and involves deacylation of mischarged Ala-tRNA(Pro). The misacylated Cys-tRNA(Pro) is not edited by ProRS.</text>
</comment>
<comment type="catalytic activity">
    <reaction evidence="1">
        <text>tRNA(Pro) + L-proline + ATP = L-prolyl-tRNA(Pro) + AMP + diphosphate</text>
        <dbReference type="Rhea" id="RHEA:14305"/>
        <dbReference type="Rhea" id="RHEA-COMP:9700"/>
        <dbReference type="Rhea" id="RHEA-COMP:9702"/>
        <dbReference type="ChEBI" id="CHEBI:30616"/>
        <dbReference type="ChEBI" id="CHEBI:33019"/>
        <dbReference type="ChEBI" id="CHEBI:60039"/>
        <dbReference type="ChEBI" id="CHEBI:78442"/>
        <dbReference type="ChEBI" id="CHEBI:78532"/>
        <dbReference type="ChEBI" id="CHEBI:456215"/>
        <dbReference type="EC" id="6.1.1.15"/>
    </reaction>
</comment>
<comment type="subunit">
    <text evidence="1">Homodimer.</text>
</comment>
<comment type="subcellular location">
    <subcellularLocation>
        <location evidence="1">Cytoplasm</location>
    </subcellularLocation>
</comment>
<comment type="domain">
    <text evidence="1">Consists of three domains: the N-terminal catalytic domain, the editing domain and the C-terminal anticodon-binding domain.</text>
</comment>
<comment type="similarity">
    <text evidence="1">Belongs to the class-II aminoacyl-tRNA synthetase family. ProS type 1 subfamily.</text>
</comment>
<evidence type="ECO:0000255" key="1">
    <source>
        <dbReference type="HAMAP-Rule" id="MF_01569"/>
    </source>
</evidence>
<proteinExistence type="inferred from homology"/>
<sequence length="570" mass="63411">MRASELFSPTLREVPAEAEVVSHQLLLRAGFIRRAAAGVYTYLPLAMRVIKKIEQIVREEMDRQGGQELLMPIIQPAEIWQESGRWDVYGPELFRLKDRHDRDFALGPTHEEIITVLVRGEVSSYKQLPLLLYQIQNKYRDERRPRFGLMRGREFIMKDLYSFDRDEEGLNVSYMKMYEAYTRVFQRCGLHFRPVEADSGAIGGSDTHEFMVLAESGEATVLYCDGNGCDYAANVEKAALPFKERRTEEEMRPVAARETPGCRSVEEVCGFLGVPARKIIKTLIYRTEKEVLAALVRGDRDVNEVKLLNASGALRLELAGADTVKSITGASVGYAGPVGLKGVRIIADPEAAAAVNAVTGANRDDTHLINVNPGRDFKIDLVADIRMVQAGEPCPRCGAGLKEAKGIEVGQIFKLGDKYSRALGASYLDEKGQSRPVIMGCYGIGITRTMAAAIEQNHDRDGIIWPASIAPFHVVVIPVNVKDGGQYAMAEEVYSRLWAAGIEAVLDDRTERAGVKFKDADLIGYPLRITIGAKAVEEKLVEIRIRKNGETVFVPMNELEEKVEDMLKEL</sequence>
<gene>
    <name evidence="1" type="primary">proS</name>
    <name type="ordered locus">PTH_1263</name>
</gene>
<keyword id="KW-0030">Aminoacyl-tRNA synthetase</keyword>
<keyword id="KW-0067">ATP-binding</keyword>
<keyword id="KW-0963">Cytoplasm</keyword>
<keyword id="KW-0436">Ligase</keyword>
<keyword id="KW-0547">Nucleotide-binding</keyword>
<keyword id="KW-0648">Protein biosynthesis</keyword>
<keyword id="KW-1185">Reference proteome</keyword>
<feature type="chain" id="PRO_1000087845" description="Proline--tRNA ligase">
    <location>
        <begin position="1"/>
        <end position="570"/>
    </location>
</feature>
<name>SYP_PELTS</name>
<dbReference type="EC" id="6.1.1.15" evidence="1"/>
<dbReference type="EMBL" id="AP009389">
    <property type="protein sequence ID" value="BAF59444.1"/>
    <property type="molecule type" value="Genomic_DNA"/>
</dbReference>
<dbReference type="SMR" id="A5D2U6"/>
<dbReference type="STRING" id="370438.PTH_1263"/>
<dbReference type="KEGG" id="pth:PTH_1263"/>
<dbReference type="eggNOG" id="COG0442">
    <property type="taxonomic scope" value="Bacteria"/>
</dbReference>
<dbReference type="HOGENOM" id="CLU_016739_0_0_9"/>
<dbReference type="Proteomes" id="UP000006556">
    <property type="component" value="Chromosome"/>
</dbReference>
<dbReference type="GO" id="GO:0005829">
    <property type="term" value="C:cytosol"/>
    <property type="evidence" value="ECO:0007669"/>
    <property type="project" value="TreeGrafter"/>
</dbReference>
<dbReference type="GO" id="GO:0002161">
    <property type="term" value="F:aminoacyl-tRNA deacylase activity"/>
    <property type="evidence" value="ECO:0007669"/>
    <property type="project" value="InterPro"/>
</dbReference>
<dbReference type="GO" id="GO:0005524">
    <property type="term" value="F:ATP binding"/>
    <property type="evidence" value="ECO:0007669"/>
    <property type="project" value="UniProtKB-UniRule"/>
</dbReference>
<dbReference type="GO" id="GO:0140096">
    <property type="term" value="F:catalytic activity, acting on a protein"/>
    <property type="evidence" value="ECO:0007669"/>
    <property type="project" value="UniProtKB-ARBA"/>
</dbReference>
<dbReference type="GO" id="GO:0004827">
    <property type="term" value="F:proline-tRNA ligase activity"/>
    <property type="evidence" value="ECO:0007669"/>
    <property type="project" value="UniProtKB-UniRule"/>
</dbReference>
<dbReference type="GO" id="GO:0016740">
    <property type="term" value="F:transferase activity"/>
    <property type="evidence" value="ECO:0007669"/>
    <property type="project" value="UniProtKB-ARBA"/>
</dbReference>
<dbReference type="GO" id="GO:0006433">
    <property type="term" value="P:prolyl-tRNA aminoacylation"/>
    <property type="evidence" value="ECO:0007669"/>
    <property type="project" value="UniProtKB-UniRule"/>
</dbReference>
<dbReference type="CDD" id="cd04334">
    <property type="entry name" value="ProRS-INS"/>
    <property type="match status" value="1"/>
</dbReference>
<dbReference type="CDD" id="cd00861">
    <property type="entry name" value="ProRS_anticodon_short"/>
    <property type="match status" value="1"/>
</dbReference>
<dbReference type="CDD" id="cd00779">
    <property type="entry name" value="ProRS_core_prok"/>
    <property type="match status" value="1"/>
</dbReference>
<dbReference type="FunFam" id="3.30.930.10:FF:000065">
    <property type="entry name" value="Proline--tRNA ligase"/>
    <property type="match status" value="1"/>
</dbReference>
<dbReference type="FunFam" id="3.30.930.10:FF:000066">
    <property type="entry name" value="Proline--tRNA ligase"/>
    <property type="match status" value="1"/>
</dbReference>
<dbReference type="FunFam" id="3.40.50.800:FF:000011">
    <property type="entry name" value="Proline--tRNA ligase"/>
    <property type="match status" value="1"/>
</dbReference>
<dbReference type="Gene3D" id="3.40.50.800">
    <property type="entry name" value="Anticodon-binding domain"/>
    <property type="match status" value="1"/>
</dbReference>
<dbReference type="Gene3D" id="3.30.930.10">
    <property type="entry name" value="Bira Bifunctional Protein, Domain 2"/>
    <property type="match status" value="2"/>
</dbReference>
<dbReference type="Gene3D" id="3.90.960.10">
    <property type="entry name" value="YbaK/aminoacyl-tRNA synthetase-associated domain"/>
    <property type="match status" value="1"/>
</dbReference>
<dbReference type="HAMAP" id="MF_01569">
    <property type="entry name" value="Pro_tRNA_synth_type1"/>
    <property type="match status" value="1"/>
</dbReference>
<dbReference type="InterPro" id="IPR002314">
    <property type="entry name" value="aa-tRNA-synt_IIb"/>
</dbReference>
<dbReference type="InterPro" id="IPR006195">
    <property type="entry name" value="aa-tRNA-synth_II"/>
</dbReference>
<dbReference type="InterPro" id="IPR045864">
    <property type="entry name" value="aa-tRNA-synth_II/BPL/LPL"/>
</dbReference>
<dbReference type="InterPro" id="IPR004154">
    <property type="entry name" value="Anticodon-bd"/>
</dbReference>
<dbReference type="InterPro" id="IPR036621">
    <property type="entry name" value="Anticodon-bd_dom_sf"/>
</dbReference>
<dbReference type="InterPro" id="IPR002316">
    <property type="entry name" value="Pro-tRNA-ligase_IIa"/>
</dbReference>
<dbReference type="InterPro" id="IPR004500">
    <property type="entry name" value="Pro-tRNA-synth_IIa_bac-type"/>
</dbReference>
<dbReference type="InterPro" id="IPR023717">
    <property type="entry name" value="Pro-tRNA-Synthase_IIa_type1"/>
</dbReference>
<dbReference type="InterPro" id="IPR050062">
    <property type="entry name" value="Pro-tRNA_synthetase"/>
</dbReference>
<dbReference type="InterPro" id="IPR044140">
    <property type="entry name" value="ProRS_anticodon_short"/>
</dbReference>
<dbReference type="InterPro" id="IPR033730">
    <property type="entry name" value="ProRS_core_prok"/>
</dbReference>
<dbReference type="InterPro" id="IPR036754">
    <property type="entry name" value="YbaK/aa-tRNA-synt-asso_dom_sf"/>
</dbReference>
<dbReference type="InterPro" id="IPR007214">
    <property type="entry name" value="YbaK/aa-tRNA-synth-assoc-dom"/>
</dbReference>
<dbReference type="NCBIfam" id="NF006625">
    <property type="entry name" value="PRK09194.1"/>
    <property type="match status" value="1"/>
</dbReference>
<dbReference type="NCBIfam" id="TIGR00409">
    <property type="entry name" value="proS_fam_II"/>
    <property type="match status" value="1"/>
</dbReference>
<dbReference type="PANTHER" id="PTHR42753">
    <property type="entry name" value="MITOCHONDRIAL RIBOSOME PROTEIN L39/PROLYL-TRNA LIGASE FAMILY MEMBER"/>
    <property type="match status" value="1"/>
</dbReference>
<dbReference type="PANTHER" id="PTHR42753:SF2">
    <property type="entry name" value="PROLINE--TRNA LIGASE"/>
    <property type="match status" value="1"/>
</dbReference>
<dbReference type="Pfam" id="PF03129">
    <property type="entry name" value="HGTP_anticodon"/>
    <property type="match status" value="1"/>
</dbReference>
<dbReference type="Pfam" id="PF00587">
    <property type="entry name" value="tRNA-synt_2b"/>
    <property type="match status" value="1"/>
</dbReference>
<dbReference type="Pfam" id="PF04073">
    <property type="entry name" value="tRNA_edit"/>
    <property type="match status" value="1"/>
</dbReference>
<dbReference type="PIRSF" id="PIRSF001535">
    <property type="entry name" value="ProRS_1"/>
    <property type="match status" value="1"/>
</dbReference>
<dbReference type="PRINTS" id="PR01046">
    <property type="entry name" value="TRNASYNTHPRO"/>
</dbReference>
<dbReference type="SUPFAM" id="SSF52954">
    <property type="entry name" value="Class II aaRS ABD-related"/>
    <property type="match status" value="1"/>
</dbReference>
<dbReference type="SUPFAM" id="SSF55681">
    <property type="entry name" value="Class II aaRS and biotin synthetases"/>
    <property type="match status" value="1"/>
</dbReference>
<dbReference type="SUPFAM" id="SSF55826">
    <property type="entry name" value="YbaK/ProRS associated domain"/>
    <property type="match status" value="1"/>
</dbReference>
<dbReference type="PROSITE" id="PS50862">
    <property type="entry name" value="AA_TRNA_LIGASE_II"/>
    <property type="match status" value="1"/>
</dbReference>
<reference key="1">
    <citation type="journal article" date="2008" name="Genome Res.">
        <title>The genome of Pelotomaculum thermopropionicum reveals niche-associated evolution in anaerobic microbiota.</title>
        <authorList>
            <person name="Kosaka T."/>
            <person name="Kato S."/>
            <person name="Shimoyama T."/>
            <person name="Ishii S."/>
            <person name="Abe T."/>
            <person name="Watanabe K."/>
        </authorList>
    </citation>
    <scope>NUCLEOTIDE SEQUENCE [LARGE SCALE GENOMIC DNA]</scope>
    <source>
        <strain>DSM 13744 / JCM 10971 / SI</strain>
    </source>
</reference>